<accession>B1VKE1</accession>
<name>RR18_CRYJA</name>
<gene>
    <name evidence="1" type="primary">rps18</name>
</gene>
<reference key="1">
    <citation type="journal article" date="2008" name="BMC Plant Biol.">
        <title>Complete nucleotide sequence of the Cryptomeria japonica D. Don. chloroplast genome and comparative chloroplast genomics: diversified genomic structure of coniferous species.</title>
        <authorList>
            <person name="Hirao T."/>
            <person name="Watanabe A."/>
            <person name="Kurita M."/>
            <person name="Kondo T."/>
            <person name="Takata K."/>
        </authorList>
    </citation>
    <scope>NUCLEOTIDE SEQUENCE [LARGE SCALE GENOMIC DNA]</scope>
</reference>
<keyword id="KW-0150">Chloroplast</keyword>
<keyword id="KW-0934">Plastid</keyword>
<keyword id="KW-0687">Ribonucleoprotein</keyword>
<keyword id="KW-0689">Ribosomal protein</keyword>
<keyword id="KW-0694">RNA-binding</keyword>
<keyword id="KW-0699">rRNA-binding</keyword>
<dbReference type="EMBL" id="AP009377">
    <property type="protein sequence ID" value="BAG16652.1"/>
    <property type="molecule type" value="Genomic_DNA"/>
</dbReference>
<dbReference type="RefSeq" id="YP_001806654.1">
    <property type="nucleotide sequence ID" value="NC_010548.1"/>
</dbReference>
<dbReference type="SMR" id="B1VKE1"/>
<dbReference type="GeneID" id="6166626"/>
<dbReference type="KEGG" id="cjf:6166626"/>
<dbReference type="OrthoDB" id="21463at2759"/>
<dbReference type="GO" id="GO:0009507">
    <property type="term" value="C:chloroplast"/>
    <property type="evidence" value="ECO:0007669"/>
    <property type="project" value="UniProtKB-SubCell"/>
</dbReference>
<dbReference type="GO" id="GO:0005763">
    <property type="term" value="C:mitochondrial small ribosomal subunit"/>
    <property type="evidence" value="ECO:0007669"/>
    <property type="project" value="TreeGrafter"/>
</dbReference>
<dbReference type="GO" id="GO:0070181">
    <property type="term" value="F:small ribosomal subunit rRNA binding"/>
    <property type="evidence" value="ECO:0007669"/>
    <property type="project" value="TreeGrafter"/>
</dbReference>
<dbReference type="GO" id="GO:0003735">
    <property type="term" value="F:structural constituent of ribosome"/>
    <property type="evidence" value="ECO:0007669"/>
    <property type="project" value="InterPro"/>
</dbReference>
<dbReference type="GO" id="GO:0006412">
    <property type="term" value="P:translation"/>
    <property type="evidence" value="ECO:0007669"/>
    <property type="project" value="UniProtKB-UniRule"/>
</dbReference>
<dbReference type="FunFam" id="4.10.640.10:FF:000002">
    <property type="entry name" value="30S ribosomal protein S18, chloroplastic"/>
    <property type="match status" value="1"/>
</dbReference>
<dbReference type="Gene3D" id="4.10.640.10">
    <property type="entry name" value="Ribosomal protein S18"/>
    <property type="match status" value="1"/>
</dbReference>
<dbReference type="HAMAP" id="MF_00270">
    <property type="entry name" value="Ribosomal_bS18"/>
    <property type="match status" value="1"/>
</dbReference>
<dbReference type="InterPro" id="IPR001648">
    <property type="entry name" value="Ribosomal_bS18"/>
</dbReference>
<dbReference type="InterPro" id="IPR036870">
    <property type="entry name" value="Ribosomal_bS18_sf"/>
</dbReference>
<dbReference type="NCBIfam" id="TIGR00165">
    <property type="entry name" value="S18"/>
    <property type="match status" value="1"/>
</dbReference>
<dbReference type="PANTHER" id="PTHR13479">
    <property type="entry name" value="30S RIBOSOMAL PROTEIN S18"/>
    <property type="match status" value="1"/>
</dbReference>
<dbReference type="PANTHER" id="PTHR13479:SF40">
    <property type="entry name" value="SMALL RIBOSOMAL SUBUNIT PROTEIN BS18M"/>
    <property type="match status" value="1"/>
</dbReference>
<dbReference type="Pfam" id="PF01084">
    <property type="entry name" value="Ribosomal_S18"/>
    <property type="match status" value="1"/>
</dbReference>
<dbReference type="PRINTS" id="PR00974">
    <property type="entry name" value="RIBOSOMALS18"/>
</dbReference>
<dbReference type="SUPFAM" id="SSF46911">
    <property type="entry name" value="Ribosomal protein S18"/>
    <property type="match status" value="1"/>
</dbReference>
<geneLocation type="chloroplast"/>
<proteinExistence type="inferred from homology"/>
<evidence type="ECO:0000255" key="1">
    <source>
        <dbReference type="HAMAP-Rule" id="MF_00270"/>
    </source>
</evidence>
<evidence type="ECO:0000256" key="2">
    <source>
        <dbReference type="SAM" id="MobiDB-lite"/>
    </source>
</evidence>
<evidence type="ECO:0000305" key="3"/>
<sequence>MKPSFRNTSPSFRNRSKPYFRNRSKPYFRNRSKPSFRNTSKRFSPNQQSFRKRLSTIRPGEQIDYKNISLINRFISEQGKILSRRTNRLALKQQRLIARAVKQARILCLIPFLSLK</sequence>
<organism>
    <name type="scientific">Cryptomeria japonica</name>
    <name type="common">Japanese cedar</name>
    <name type="synonym">Cupressus japonica</name>
    <dbReference type="NCBI Taxonomy" id="3369"/>
    <lineage>
        <taxon>Eukaryota</taxon>
        <taxon>Viridiplantae</taxon>
        <taxon>Streptophyta</taxon>
        <taxon>Embryophyta</taxon>
        <taxon>Tracheophyta</taxon>
        <taxon>Spermatophyta</taxon>
        <taxon>Pinopsida</taxon>
        <taxon>Pinidae</taxon>
        <taxon>Conifers II</taxon>
        <taxon>Cupressales</taxon>
        <taxon>Cupressaceae</taxon>
        <taxon>Cryptomeria</taxon>
    </lineage>
</organism>
<protein>
    <recommendedName>
        <fullName evidence="1">Small ribosomal subunit protein bS18c</fullName>
    </recommendedName>
    <alternativeName>
        <fullName evidence="3">30S ribosomal protein S18, chloroplastic</fullName>
    </alternativeName>
</protein>
<feature type="chain" id="PRO_0000345577" description="Small ribosomal subunit protein bS18c">
    <location>
        <begin position="1"/>
        <end position="116"/>
    </location>
</feature>
<feature type="region of interest" description="Disordered" evidence="2">
    <location>
        <begin position="1"/>
        <end position="51"/>
    </location>
</feature>
<feature type="compositionally biased region" description="Polar residues" evidence="2">
    <location>
        <begin position="1"/>
        <end position="13"/>
    </location>
</feature>
<feature type="compositionally biased region" description="Basic residues" evidence="2">
    <location>
        <begin position="14"/>
        <end position="34"/>
    </location>
</feature>
<feature type="compositionally biased region" description="Polar residues" evidence="2">
    <location>
        <begin position="35"/>
        <end position="49"/>
    </location>
</feature>
<comment type="subunit">
    <text evidence="1">Part of the 30S ribosomal subunit.</text>
</comment>
<comment type="subcellular location">
    <subcellularLocation>
        <location>Plastid</location>
        <location>Chloroplast</location>
    </subcellularLocation>
</comment>
<comment type="similarity">
    <text evidence="1">Belongs to the bacterial ribosomal protein bS18 family.</text>
</comment>